<comment type="catalytic activity">
    <reaction>
        <text>pyruvate + ATP = phosphoenolpyruvate + ADP + H(+)</text>
        <dbReference type="Rhea" id="RHEA:18157"/>
        <dbReference type="ChEBI" id="CHEBI:15361"/>
        <dbReference type="ChEBI" id="CHEBI:15378"/>
        <dbReference type="ChEBI" id="CHEBI:30616"/>
        <dbReference type="ChEBI" id="CHEBI:58702"/>
        <dbReference type="ChEBI" id="CHEBI:456216"/>
        <dbReference type="EC" id="2.7.1.40"/>
    </reaction>
</comment>
<comment type="cofactor">
    <cofactor evidence="1">
        <name>Mg(2+)</name>
        <dbReference type="ChEBI" id="CHEBI:18420"/>
    </cofactor>
</comment>
<comment type="cofactor">
    <cofactor evidence="1">
        <name>K(+)</name>
        <dbReference type="ChEBI" id="CHEBI:29103"/>
    </cofactor>
</comment>
<comment type="pathway">
    <text>Carbohydrate degradation; glycolysis; pyruvate from D-glyceraldehyde 3-phosphate: step 5/5.</text>
</comment>
<comment type="subunit">
    <text evidence="1">Oligomer of alpha and beta subunits.</text>
</comment>
<comment type="subcellular location">
    <subcellularLocation>
        <location>Plastid</location>
        <location>Chloroplast</location>
    </subcellularLocation>
</comment>
<comment type="alternative products">
    <event type="alternative splicing"/>
    <isoform>
        <id>Q43117-1</id>
        <name>Alpha</name>
        <sequence type="displayed"/>
    </isoform>
    <isoform>
        <id>Q43117-2</id>
        <name>Beta</name>
        <sequence type="described" ref="VSP_002886"/>
    </isoform>
</comment>
<comment type="similarity">
    <text evidence="7">Belongs to the pyruvate kinase family.</text>
</comment>
<dbReference type="EC" id="2.7.1.40"/>
<dbReference type="EMBL" id="M64736">
    <property type="protein sequence ID" value="AAA33870.1"/>
    <property type="molecule type" value="mRNA"/>
</dbReference>
<dbReference type="EMBL" id="M64737">
    <property type="protein sequence ID" value="AAA33871.1"/>
    <property type="molecule type" value="mRNA"/>
</dbReference>
<dbReference type="PIR" id="T10051">
    <property type="entry name" value="T10051"/>
</dbReference>
<dbReference type="PIR" id="T10054">
    <property type="entry name" value="T10054"/>
</dbReference>
<dbReference type="RefSeq" id="NP_001411070.1">
    <molecule id="Q43117-1"/>
    <property type="nucleotide sequence ID" value="NM_001424141.1"/>
</dbReference>
<dbReference type="RefSeq" id="XP_002517044.1">
    <property type="nucleotide sequence ID" value="XM_002516998.2"/>
</dbReference>
<dbReference type="SMR" id="Q43117"/>
<dbReference type="GeneID" id="8280200"/>
<dbReference type="eggNOG" id="KOG2323">
    <property type="taxonomic scope" value="Eukaryota"/>
</dbReference>
<dbReference type="OMA" id="QHTINVN"/>
<dbReference type="OrthoDB" id="108365at2759"/>
<dbReference type="SABIO-RK" id="Q43117"/>
<dbReference type="UniPathway" id="UPA00109">
    <property type="reaction ID" value="UER00188"/>
</dbReference>
<dbReference type="GO" id="GO:0009507">
    <property type="term" value="C:chloroplast"/>
    <property type="evidence" value="ECO:0007669"/>
    <property type="project" value="UniProtKB-SubCell"/>
</dbReference>
<dbReference type="GO" id="GO:0005524">
    <property type="term" value="F:ATP binding"/>
    <property type="evidence" value="ECO:0007669"/>
    <property type="project" value="UniProtKB-KW"/>
</dbReference>
<dbReference type="GO" id="GO:0016301">
    <property type="term" value="F:kinase activity"/>
    <property type="evidence" value="ECO:0007669"/>
    <property type="project" value="UniProtKB-KW"/>
</dbReference>
<dbReference type="GO" id="GO:0000287">
    <property type="term" value="F:magnesium ion binding"/>
    <property type="evidence" value="ECO:0007669"/>
    <property type="project" value="InterPro"/>
</dbReference>
<dbReference type="GO" id="GO:0030955">
    <property type="term" value="F:potassium ion binding"/>
    <property type="evidence" value="ECO:0007669"/>
    <property type="project" value="InterPro"/>
</dbReference>
<dbReference type="GO" id="GO:0004743">
    <property type="term" value="F:pyruvate kinase activity"/>
    <property type="evidence" value="ECO:0007669"/>
    <property type="project" value="UniProtKB-EC"/>
</dbReference>
<dbReference type="FunFam" id="2.40.33.10:FF:000005">
    <property type="entry name" value="Pyruvate kinase"/>
    <property type="match status" value="1"/>
</dbReference>
<dbReference type="FunFam" id="3.20.20.60:FF:000025">
    <property type="entry name" value="Pyruvate kinase"/>
    <property type="match status" value="1"/>
</dbReference>
<dbReference type="FunFam" id="3.40.1380.20:FF:000010">
    <property type="entry name" value="Pyruvate kinase"/>
    <property type="match status" value="1"/>
</dbReference>
<dbReference type="Gene3D" id="3.20.20.60">
    <property type="entry name" value="Phosphoenolpyruvate-binding domains"/>
    <property type="match status" value="1"/>
</dbReference>
<dbReference type="Gene3D" id="2.40.33.10">
    <property type="entry name" value="PK beta-barrel domain-like"/>
    <property type="match status" value="1"/>
</dbReference>
<dbReference type="Gene3D" id="3.40.1380.20">
    <property type="entry name" value="Pyruvate kinase, C-terminal domain"/>
    <property type="match status" value="1"/>
</dbReference>
<dbReference type="InterPro" id="IPR001697">
    <property type="entry name" value="Pyr_Knase"/>
</dbReference>
<dbReference type="InterPro" id="IPR015813">
    <property type="entry name" value="Pyrv/PenolPyrv_kinase-like_dom"/>
</dbReference>
<dbReference type="InterPro" id="IPR040442">
    <property type="entry name" value="Pyrv_kinase-like_dom_sf"/>
</dbReference>
<dbReference type="InterPro" id="IPR011037">
    <property type="entry name" value="Pyrv_Knase-like_insert_dom_sf"/>
</dbReference>
<dbReference type="InterPro" id="IPR018209">
    <property type="entry name" value="Pyrv_Knase_AS"/>
</dbReference>
<dbReference type="InterPro" id="IPR015793">
    <property type="entry name" value="Pyrv_Knase_brl"/>
</dbReference>
<dbReference type="InterPro" id="IPR015795">
    <property type="entry name" value="Pyrv_Knase_C"/>
</dbReference>
<dbReference type="InterPro" id="IPR036918">
    <property type="entry name" value="Pyrv_Knase_C_sf"/>
</dbReference>
<dbReference type="InterPro" id="IPR015806">
    <property type="entry name" value="Pyrv_Knase_insert_dom_sf"/>
</dbReference>
<dbReference type="NCBIfam" id="TIGR01064">
    <property type="entry name" value="pyruv_kin"/>
    <property type="match status" value="1"/>
</dbReference>
<dbReference type="PANTHER" id="PTHR11817">
    <property type="entry name" value="PYRUVATE KINASE"/>
    <property type="match status" value="1"/>
</dbReference>
<dbReference type="Pfam" id="PF00224">
    <property type="entry name" value="PK"/>
    <property type="match status" value="1"/>
</dbReference>
<dbReference type="Pfam" id="PF02887">
    <property type="entry name" value="PK_C"/>
    <property type="match status" value="1"/>
</dbReference>
<dbReference type="PRINTS" id="PR01050">
    <property type="entry name" value="PYRUVTKNASE"/>
</dbReference>
<dbReference type="SUPFAM" id="SSF51621">
    <property type="entry name" value="Phosphoenolpyruvate/pyruvate domain"/>
    <property type="match status" value="1"/>
</dbReference>
<dbReference type="SUPFAM" id="SSF50800">
    <property type="entry name" value="PK beta-barrel domain-like"/>
    <property type="match status" value="1"/>
</dbReference>
<dbReference type="SUPFAM" id="SSF52935">
    <property type="entry name" value="PK C-terminal domain-like"/>
    <property type="match status" value="1"/>
</dbReference>
<dbReference type="PROSITE" id="PS00110">
    <property type="entry name" value="PYRUVATE_KINASE"/>
    <property type="match status" value="1"/>
</dbReference>
<feature type="transit peptide" description="Chloroplast" evidence="5">
    <location>
        <begin position="1"/>
        <end position="74"/>
    </location>
</feature>
<feature type="chain" id="PRO_0000016662" description="Pyruvate kinase isozyme A, chloroplastic">
    <location>
        <begin position="75"/>
        <end position="583"/>
    </location>
</feature>
<feature type="region of interest" description="Disordered" evidence="4">
    <location>
        <begin position="43"/>
        <end position="75"/>
    </location>
</feature>
<feature type="compositionally biased region" description="Low complexity" evidence="4">
    <location>
        <begin position="43"/>
        <end position="52"/>
    </location>
</feature>
<feature type="compositionally biased region" description="Polar residues" evidence="4">
    <location>
        <begin position="62"/>
        <end position="75"/>
    </location>
</feature>
<feature type="binding site" evidence="1">
    <location>
        <position position="134"/>
    </location>
    <ligand>
        <name>substrate</name>
    </ligand>
</feature>
<feature type="binding site" evidence="2">
    <location>
        <begin position="136"/>
        <end position="139"/>
    </location>
    <ligand>
        <name>ATP</name>
        <dbReference type="ChEBI" id="CHEBI:30616"/>
    </ligand>
</feature>
<feature type="binding site" evidence="1">
    <location>
        <position position="136"/>
    </location>
    <ligand>
        <name>K(+)</name>
        <dbReference type="ChEBI" id="CHEBI:29103"/>
    </ligand>
</feature>
<feature type="binding site" evidence="1">
    <location>
        <position position="168"/>
    </location>
    <ligand>
        <name>K(+)</name>
        <dbReference type="ChEBI" id="CHEBI:29103"/>
    </ligand>
</feature>
<feature type="binding site" evidence="1">
    <location>
        <position position="169"/>
    </location>
    <ligand>
        <name>K(+)</name>
        <dbReference type="ChEBI" id="CHEBI:29103"/>
    </ligand>
</feature>
<feature type="binding site" evidence="3">
    <location>
        <position position="333"/>
    </location>
    <ligand>
        <name>Mg(2+)</name>
        <dbReference type="ChEBI" id="CHEBI:18420"/>
    </ligand>
</feature>
<feature type="binding site" evidence="1">
    <location>
        <position position="356"/>
    </location>
    <ligand>
        <name>substrate</name>
    </ligand>
</feature>
<feature type="binding site" evidence="1">
    <location>
        <position position="357"/>
    </location>
    <ligand>
        <name>Mg(2+)</name>
        <dbReference type="ChEBI" id="CHEBI:18420"/>
    </ligand>
</feature>
<feature type="binding site" evidence="1">
    <location>
        <position position="357"/>
    </location>
    <ligand>
        <name>substrate</name>
    </ligand>
</feature>
<feature type="binding site" evidence="1">
    <location>
        <position position="389"/>
    </location>
    <ligand>
        <name>substrate</name>
    </ligand>
</feature>
<feature type="site" description="Transition state stabilizer" evidence="1">
    <location>
        <position position="331"/>
    </location>
</feature>
<feature type="splice variant" id="VSP_002886" description="In isoform Beta." evidence="6">
    <original>MSQSLHFSPNLTFAKQPFPKLPLPFPTSNSRYPVNNYKSLSIKASTSPSSSSDPQVLVADNGTGNSGVLYNNNNKSVTVSDPSSIEVDAVTETELKENGFRSTRRTKLVCTIGPATCGFEELEALAVGG</original>
    <variation>MAVVVKDLEEAVRVVVLAVLRDMEVVVVLVTAVMGVVGD</variation>
    <location>
        <begin position="1"/>
        <end position="129"/>
    </location>
</feature>
<evidence type="ECO:0000250" key="1"/>
<evidence type="ECO:0000250" key="2">
    <source>
        <dbReference type="UniProtKB" id="P14618"/>
    </source>
</evidence>
<evidence type="ECO:0000255" key="3"/>
<evidence type="ECO:0000256" key="4">
    <source>
        <dbReference type="SAM" id="MobiDB-lite"/>
    </source>
</evidence>
<evidence type="ECO:0000269" key="5">
    <source>
    </source>
</evidence>
<evidence type="ECO:0000303" key="6">
    <source>
    </source>
</evidence>
<evidence type="ECO:0000305" key="7"/>
<protein>
    <recommendedName>
        <fullName>Pyruvate kinase isozyme A, chloroplastic</fullName>
        <ecNumber>2.7.1.40</ecNumber>
    </recommendedName>
</protein>
<keyword id="KW-0025">Alternative splicing</keyword>
<keyword id="KW-0067">ATP-binding</keyword>
<keyword id="KW-0150">Chloroplast</keyword>
<keyword id="KW-0903">Direct protein sequencing</keyword>
<keyword id="KW-0324">Glycolysis</keyword>
<keyword id="KW-0418">Kinase</keyword>
<keyword id="KW-0460">Magnesium</keyword>
<keyword id="KW-0479">Metal-binding</keyword>
<keyword id="KW-0547">Nucleotide-binding</keyword>
<keyword id="KW-0934">Plastid</keyword>
<keyword id="KW-0630">Potassium</keyword>
<keyword id="KW-0670">Pyruvate</keyword>
<keyword id="KW-0808">Transferase</keyword>
<keyword id="KW-0809">Transit peptide</keyword>
<reference key="1">
    <citation type="journal article" date="1991" name="Plant Physiol.">
        <title>Relationship between the subunits of leucoplast pyruvate kinase from Ricinus communis and a comparison with the enzyme from other sources.</title>
        <authorList>
            <person name="Blakeley S.D."/>
            <person name="Plaxton W.C."/>
            <person name="Dennis D.T."/>
        </authorList>
    </citation>
    <scope>NUCLEOTIDE SEQUENCE [MRNA] (ISOFORMS ALPHA AND BETA)</scope>
    <scope>PROTEIN SEQUENCE OF 75-81</scope>
    <source>
        <strain>cv. Baker 296</strain>
        <tissue>Endosperm</tissue>
    </source>
</reference>
<accession>Q43117</accession>
<accession>Q43118</accession>
<sequence length="583" mass="64094">MSQSLHFSPNLTFAKQPFPKLPLPFPTSNSRYPVNNYKSLSIKASTSPSSSSDPQVLVADNGTGNSGVLYNNNNKSVTVSDPSSIEVDAVTETELKENGFRSTRRTKLVCTIGPATCGFEELEALAVGGMNVARINMCHGTREWHKSVIERVRRLNEEKGFAVAIMMDTEGSEIHMGDLGGASSAKAEDGEIWTFSVRAYDSPRPERTINVNYDGFAEDVKVGDELLVDGGMVRFEVIEKIGPDVKCRCTDPGLLLPRANLTFWRDGSLVRERNAMLPTISSKDWLDIDFGIAEGVDFIAISFVKSAEVINHLKSYIAARSRDSDIAVIAKIESIDSLKNLEEIIRASDGAMVARGDLGAQIPLEQVPSAQQNIVQVCRQLNKPVIVASQLLESMIEYPTPTRAEVADVSEAVRQRADALMLSGESAMGQYPEKALAVLRSVSVRIEKWWREEKHHEAMELPAIGSTYSDSISEEICNSAAKMANNLGVDALFVYTKDGHMASLLSRCRPDCPIFAFTTTTSVRRRLNLQWGLIPFRLSFADDMESNLNKTFSLLKARGMIKSGDLVIAVSDMLQSIQVMNVP</sequence>
<proteinExistence type="evidence at protein level"/>
<organism>
    <name type="scientific">Ricinus communis</name>
    <name type="common">Castor bean</name>
    <dbReference type="NCBI Taxonomy" id="3988"/>
    <lineage>
        <taxon>Eukaryota</taxon>
        <taxon>Viridiplantae</taxon>
        <taxon>Streptophyta</taxon>
        <taxon>Embryophyta</taxon>
        <taxon>Tracheophyta</taxon>
        <taxon>Spermatophyta</taxon>
        <taxon>Magnoliopsida</taxon>
        <taxon>eudicotyledons</taxon>
        <taxon>Gunneridae</taxon>
        <taxon>Pentapetalae</taxon>
        <taxon>rosids</taxon>
        <taxon>fabids</taxon>
        <taxon>Malpighiales</taxon>
        <taxon>Euphorbiaceae</taxon>
        <taxon>Acalyphoideae</taxon>
        <taxon>Acalypheae</taxon>
        <taxon>Ricinus</taxon>
    </lineage>
</organism>
<name>KPYA_RICCO</name>